<proteinExistence type="predicted"/>
<gene>
    <name type="primary">NS2</name>
</gene>
<dbReference type="EMBL" id="S47266">
    <property type="protein sequence ID" value="AAB23700.1"/>
    <property type="molecule type" value="Genomic_DNA"/>
</dbReference>
<dbReference type="PIR" id="C44054">
    <property type="entry name" value="C44054"/>
</dbReference>
<dbReference type="KEGG" id="vg:955413"/>
<dbReference type="Proteomes" id="UP000008294">
    <property type="component" value="Segment"/>
</dbReference>
<dbReference type="InterPro" id="IPR016770">
    <property type="entry name" value="Non-structural_NS2"/>
</dbReference>
<dbReference type="PIRSF" id="PIRSF020196">
    <property type="entry name" value="Nonstructural_NS2"/>
    <property type="match status" value="1"/>
</dbReference>
<name>VNS2_JDNVP</name>
<organismHost>
    <name type="scientific">Lepidoptera</name>
    <name type="common">butterflies and moths</name>
    <dbReference type="NCBI Taxonomy" id="7088"/>
</organismHost>
<sequence>METPTEKPIVLPDLIKTLYESLQEEHPLVNNVAWWQIHLENVNGHMEDEEQWPALQKNLKKTFNIWQKNWKKWAVNSLDTLLGKVLNLPAHISAMSLSYEIFSSVINVWTSCVSTEEVDETDCSDFLKKEITSTSSTIALTPIAVAGTSGLVKSSPSDLFRKLANQSNSSGNSSEQTGTMSSSISLYENGESVQYTLEEKVGKYRVTMNVYDGPESLKKEKWYQAPIARITMSVNSKSTKLAVDQMLAVLTEDFMKRKPIRQGNSHTYGKRQKRY</sequence>
<protein>
    <recommendedName>
        <fullName>Putative non-structural protein NS2</fullName>
    </recommendedName>
    <alternativeName>
        <fullName>ORF3</fullName>
    </alternativeName>
</protein>
<feature type="chain" id="PRO_0000222483" description="Putative non-structural protein NS2">
    <location>
        <begin position="1"/>
        <end position="275"/>
    </location>
</feature>
<keyword id="KW-1185">Reference proteome</keyword>
<accession>Q90055</accession>
<organism>
    <name type="scientific">Junonia coenia densovirus (isolate pBRJ/1990)</name>
    <name type="common">JcDNV</name>
    <dbReference type="NCBI Taxonomy" id="648250"/>
    <lineage>
        <taxon>Viruses</taxon>
        <taxon>Monodnaviria</taxon>
        <taxon>Shotokuvirae</taxon>
        <taxon>Cossaviricota</taxon>
        <taxon>Quintoviricetes</taxon>
        <taxon>Piccovirales</taxon>
        <taxon>Parvoviridae</taxon>
        <taxon>Densovirinae</taxon>
        <taxon>Ambidensovirus</taxon>
        <taxon>Lepidopteran ambidensovirus 1</taxon>
    </lineage>
</organism>
<reference key="1">
    <citation type="journal article" date="1992" name="Virology">
        <title>Complete nucleotide sequence of the cloned infectious genome of Junonia coenia densovirus reveals an organization unique among parvoviruses.</title>
        <authorList>
            <person name="Dumas B."/>
            <person name="Jourdan M."/>
            <person name="Pascaud A.M."/>
            <person name="Bergoin M."/>
        </authorList>
    </citation>
    <scope>NUCLEOTIDE SEQUENCE [GENOMIC DNA]</scope>
</reference>